<feature type="signal peptide" evidence="4">
    <location>
        <begin position="1"/>
        <end position="16"/>
    </location>
</feature>
<feature type="propeptide" id="PRO_0000446670" description="Removed in mature form" evidence="4 10">
    <location>
        <begin position="17"/>
        <end position="136"/>
    </location>
</feature>
<feature type="chain" id="PRO_5004330871" description="Subtilisin-like serine protease Pen ch 18.0101" evidence="9 10">
    <location>
        <begin position="137"/>
        <end position="453"/>
    </location>
</feature>
<feature type="propeptide" id="PRO_0000446671" description="Removed in mature form" evidence="9">
    <location>
        <begin position="454"/>
        <end position="494"/>
    </location>
</feature>
<feature type="domain" description="Inhibitor I9" evidence="4">
    <location>
        <begin position="43"/>
        <end position="136"/>
    </location>
</feature>
<feature type="domain" description="Peptidase S8" evidence="6">
    <location>
        <begin position="146"/>
        <end position="448"/>
    </location>
</feature>
<feature type="region of interest" description="IgE-binding" evidence="7">
    <location>
        <begin position="180"/>
        <end position="198"/>
    </location>
</feature>
<feature type="region of interest" description="IgE-binding" evidence="1">
    <location>
        <begin position="209"/>
        <end position="231"/>
    </location>
</feature>
<feature type="active site" description="Charge relay system" evidence="6">
    <location>
        <position position="182"/>
    </location>
</feature>
<feature type="active site" description="Charge relay system" evidence="6">
    <location>
        <position position="214"/>
    </location>
</feature>
<feature type="active site" description="Charge relay system" evidence="6">
    <location>
        <position position="376"/>
    </location>
</feature>
<feature type="site" description="Important for catalytic activity" evidence="2">
    <location>
        <position position="311"/>
    </location>
</feature>
<feature type="glycosylation site" description="N-linked (GlcNAc...) asparagine" evidence="5">
    <location>
        <position position="244"/>
    </location>
</feature>
<feature type="glycosylation site" description="N-linked (GlcNAc...) asparagine" evidence="5">
    <location>
        <position position="280"/>
    </location>
</feature>
<feature type="glycosylation site" description="N-linked (GlcNAc...) asparagine" evidence="5">
    <location>
        <position position="443"/>
    </location>
</feature>
<organism>
    <name type="scientific">Penicillium rubens</name>
    <dbReference type="NCBI Taxonomy" id="1108849"/>
    <lineage>
        <taxon>Eukaryota</taxon>
        <taxon>Fungi</taxon>
        <taxon>Dikarya</taxon>
        <taxon>Ascomycota</taxon>
        <taxon>Pezizomycotina</taxon>
        <taxon>Eurotiomycetes</taxon>
        <taxon>Eurotiomycetidae</taxon>
        <taxon>Eurotiales</taxon>
        <taxon>Aspergillaceae</taxon>
        <taxon>Penicillium</taxon>
        <taxon>Penicillium chrysogenum species complex</taxon>
    </lineage>
</organism>
<comment type="function">
    <text evidence="3">Serine protease.</text>
</comment>
<comment type="allergen">
    <text evidence="7">Causes an allergic reaction in human. Binds to IgE of patients with bronchial asthma.</text>
</comment>
<comment type="similarity">
    <text evidence="4 9">Belongs to the peptidase S8 family.</text>
</comment>
<dbReference type="EC" id="3.4.21.-" evidence="3"/>
<dbReference type="EMBL" id="AF264027">
    <property type="protein sequence ID" value="AAF71379.1"/>
    <property type="molecule type" value="mRNA"/>
</dbReference>
<dbReference type="SMR" id="Q9P8G3"/>
<dbReference type="Allergome" id="3407">
    <property type="allergen name" value="Pen ch 18.0101"/>
</dbReference>
<dbReference type="Allergome" id="525">
    <property type="allergen name" value="Pen ch 18"/>
</dbReference>
<dbReference type="GO" id="GO:0019863">
    <property type="term" value="F:IgE binding"/>
    <property type="evidence" value="ECO:0007669"/>
    <property type="project" value="UniProtKB-KW"/>
</dbReference>
<dbReference type="GO" id="GO:0004252">
    <property type="term" value="F:serine-type endopeptidase activity"/>
    <property type="evidence" value="ECO:0000250"/>
    <property type="project" value="UniProtKB"/>
</dbReference>
<dbReference type="GO" id="GO:0006508">
    <property type="term" value="P:proteolysis"/>
    <property type="evidence" value="ECO:0000250"/>
    <property type="project" value="UniProtKB"/>
</dbReference>
<dbReference type="CDD" id="cd04077">
    <property type="entry name" value="Peptidases_S8_PCSK9_ProteinaseK_like"/>
    <property type="match status" value="1"/>
</dbReference>
<dbReference type="FunFam" id="3.30.70.80:FF:000006">
    <property type="entry name" value="Autophagic serine protease Alp2"/>
    <property type="match status" value="1"/>
</dbReference>
<dbReference type="FunFam" id="3.40.50.200:FF:000007">
    <property type="entry name" value="Subtilisin-like serine protease"/>
    <property type="match status" value="1"/>
</dbReference>
<dbReference type="Gene3D" id="3.30.70.80">
    <property type="entry name" value="Peptidase S8 propeptide/proteinase inhibitor I9"/>
    <property type="match status" value="1"/>
</dbReference>
<dbReference type="Gene3D" id="3.40.50.200">
    <property type="entry name" value="Peptidase S8/S53 domain"/>
    <property type="match status" value="1"/>
</dbReference>
<dbReference type="InterPro" id="IPR034193">
    <property type="entry name" value="PCSK9_ProteinaseK-like"/>
</dbReference>
<dbReference type="InterPro" id="IPR000209">
    <property type="entry name" value="Peptidase_S8/S53_dom"/>
</dbReference>
<dbReference type="InterPro" id="IPR036852">
    <property type="entry name" value="Peptidase_S8/S53_dom_sf"/>
</dbReference>
<dbReference type="InterPro" id="IPR022398">
    <property type="entry name" value="Peptidase_S8_His-AS"/>
</dbReference>
<dbReference type="InterPro" id="IPR023828">
    <property type="entry name" value="Peptidase_S8_Ser-AS"/>
</dbReference>
<dbReference type="InterPro" id="IPR050131">
    <property type="entry name" value="Peptidase_S8_subtilisin-like"/>
</dbReference>
<dbReference type="InterPro" id="IPR015500">
    <property type="entry name" value="Peptidase_S8_subtilisin-rel"/>
</dbReference>
<dbReference type="InterPro" id="IPR010259">
    <property type="entry name" value="S8pro/Inhibitor_I9"/>
</dbReference>
<dbReference type="InterPro" id="IPR037045">
    <property type="entry name" value="S8pro/Inhibitor_I9_sf"/>
</dbReference>
<dbReference type="PANTHER" id="PTHR43806:SF11">
    <property type="entry name" value="CEREVISIN-RELATED"/>
    <property type="match status" value="1"/>
</dbReference>
<dbReference type="PANTHER" id="PTHR43806">
    <property type="entry name" value="PEPTIDASE S8"/>
    <property type="match status" value="1"/>
</dbReference>
<dbReference type="Pfam" id="PF05922">
    <property type="entry name" value="Inhibitor_I9"/>
    <property type="match status" value="1"/>
</dbReference>
<dbReference type="Pfam" id="PF00082">
    <property type="entry name" value="Peptidase_S8"/>
    <property type="match status" value="1"/>
</dbReference>
<dbReference type="PRINTS" id="PR00723">
    <property type="entry name" value="SUBTILISIN"/>
</dbReference>
<dbReference type="SUPFAM" id="SSF54897">
    <property type="entry name" value="Protease propeptides/inhibitors"/>
    <property type="match status" value="1"/>
</dbReference>
<dbReference type="SUPFAM" id="SSF52743">
    <property type="entry name" value="Subtilisin-like"/>
    <property type="match status" value="1"/>
</dbReference>
<dbReference type="PROSITE" id="PS51892">
    <property type="entry name" value="SUBTILASE"/>
    <property type="match status" value="1"/>
</dbReference>
<dbReference type="PROSITE" id="PS00137">
    <property type="entry name" value="SUBTILASE_HIS"/>
    <property type="match status" value="1"/>
</dbReference>
<dbReference type="PROSITE" id="PS00138">
    <property type="entry name" value="SUBTILASE_SER"/>
    <property type="match status" value="1"/>
</dbReference>
<accession>Q9P8G3</accession>
<proteinExistence type="evidence at protein level"/>
<reference evidence="11" key="1">
    <citation type="journal article" date="2002" name="Biochem. J.">
        <title>Molecular and immunological characterization and IgE epitope mapping of Pen n 18, a major allergen of Penicillium notatum.</title>
        <authorList>
            <person name="Yu C.J."/>
            <person name="Chen Y.M."/>
            <person name="Su S.N."/>
            <person name="Forouhar F."/>
            <person name="Lee S.H."/>
            <person name="Chow L.P."/>
        </authorList>
    </citation>
    <scope>NUCLEOTIDE SEQUENCE [MRNA]</scope>
    <scope>PROTEIN SEQUENCE OF 137-143; 144-151; 175-179; 180-184; 201-205; 242-246; 262-266; 358-362; 401-405; 411-415 AND 421-425</scope>
    <scope>IDENTIFICATION BY MASS SPECTROMETRY</scope>
    <scope>3D-STRUCTURE MODELING</scope>
    <scope>ALLERGEN</scope>
    <scope>REGION</scope>
    <source>
        <strain evidence="8">ATCC 9179 / BCRC 30568 / CBS 197.46 / NRRL 832 / QM 940</strain>
        <tissue evidence="8">Mycelium</tissue>
    </source>
</reference>
<protein>
    <recommendedName>
        <fullName evidence="9">Subtilisin-like serine protease Pen ch 18.0101</fullName>
        <ecNumber evidence="3">3.4.21.-</ecNumber>
    </recommendedName>
    <alternativeName>
        <fullName evidence="8 11">Allergen Pen n 18</fullName>
    </alternativeName>
    <alternativeName>
        <fullName evidence="8">Vacuolar serine protease</fullName>
    </alternativeName>
    <allergenName evidence="9">Pen ch 18.0101</allergenName>
</protein>
<name>PEN18_PENRB</name>
<sequence length="494" mass="52393">MKGFLSLTLLPLLVAASPVAVNSIHNDAAPILSSMTSKDIPDSYIVVFKKHVDPSSASAHQSWLQEVHTAHTGRMELKKRSLFGFDFEAFMGLKHTFHIAGSLLGYAGHFHEDVIEQIRRHPDVDYIEKDSEVRTMSEGSVEKNAPWGLARISHRESLSFGNFNKYLYAEEGGEGVDAYVIDTGANVKHVDFEGRANWGKTIPQGDADEDGNGHGTHCSGTIAGKKFGVAKKANVYAVKVLRSNGSGTMSDVVKGVEWAAEAHIKKSKKGDKKFKGSVANMSLGGGSSRTLDLAVNAAVDAGIHFAVAAGNDNADACNYSPAAAEKAITVGASTLADERAYFSNYGKCTDIFAPGLNILSTWVGSDHATNTISGTSMASPHIAGLLAYYVSLAPAKDSAYAVADVTPKQLKAALISVATEGTLTDIPSDTPNLLAWNGGGSANYTKILADGGYKAHNAETTVEDRIGIIIDSAEKAFHKELGAIYSEIKDAVSV</sequence>
<evidence type="ECO:0000250" key="1">
    <source>
        <dbReference type="UniProtKB" id="P9WEW5"/>
    </source>
</evidence>
<evidence type="ECO:0000250" key="2">
    <source>
        <dbReference type="UniProtKB" id="Q5JIZ5"/>
    </source>
</evidence>
<evidence type="ECO:0000250" key="3">
    <source>
        <dbReference type="UniProtKB" id="Q9Y749"/>
    </source>
</evidence>
<evidence type="ECO:0000255" key="4"/>
<evidence type="ECO:0000255" key="5">
    <source>
        <dbReference type="PROSITE-ProRule" id="PRU00498"/>
    </source>
</evidence>
<evidence type="ECO:0000255" key="6">
    <source>
        <dbReference type="PROSITE-ProRule" id="PRU01240"/>
    </source>
</evidence>
<evidence type="ECO:0000269" key="7">
    <source>
    </source>
</evidence>
<evidence type="ECO:0000303" key="8">
    <source>
    </source>
</evidence>
<evidence type="ECO:0000305" key="9"/>
<evidence type="ECO:0000305" key="10">
    <source>
    </source>
</evidence>
<evidence type="ECO:0000312" key="11">
    <source>
        <dbReference type="EMBL" id="AAF71379.1"/>
    </source>
</evidence>
<keyword id="KW-0020">Allergen</keyword>
<keyword id="KW-0903">Direct protein sequencing</keyword>
<keyword id="KW-0325">Glycoprotein</keyword>
<keyword id="KW-0378">Hydrolase</keyword>
<keyword id="KW-0389">IgE-binding protein</keyword>
<keyword id="KW-0645">Protease</keyword>
<keyword id="KW-0720">Serine protease</keyword>
<keyword id="KW-0732">Signal</keyword>
<keyword id="KW-0865">Zymogen</keyword>